<reference key="1">
    <citation type="journal article" date="2002" name="Nature">
        <title>The genome sequence of Schizosaccharomyces pombe.</title>
        <authorList>
            <person name="Wood V."/>
            <person name="Gwilliam R."/>
            <person name="Rajandream M.A."/>
            <person name="Lyne M.H."/>
            <person name="Lyne R."/>
            <person name="Stewart A."/>
            <person name="Sgouros J.G."/>
            <person name="Peat N."/>
            <person name="Hayles J."/>
            <person name="Baker S.G."/>
            <person name="Basham D."/>
            <person name="Bowman S."/>
            <person name="Brooks K."/>
            <person name="Brown D."/>
            <person name="Brown S."/>
            <person name="Chillingworth T."/>
            <person name="Churcher C.M."/>
            <person name="Collins M."/>
            <person name="Connor R."/>
            <person name="Cronin A."/>
            <person name="Davis P."/>
            <person name="Feltwell T."/>
            <person name="Fraser A."/>
            <person name="Gentles S."/>
            <person name="Goble A."/>
            <person name="Hamlin N."/>
            <person name="Harris D.E."/>
            <person name="Hidalgo J."/>
            <person name="Hodgson G."/>
            <person name="Holroyd S."/>
            <person name="Hornsby T."/>
            <person name="Howarth S."/>
            <person name="Huckle E.J."/>
            <person name="Hunt S."/>
            <person name="Jagels K."/>
            <person name="James K.D."/>
            <person name="Jones L."/>
            <person name="Jones M."/>
            <person name="Leather S."/>
            <person name="McDonald S."/>
            <person name="McLean J."/>
            <person name="Mooney P."/>
            <person name="Moule S."/>
            <person name="Mungall K.L."/>
            <person name="Murphy L.D."/>
            <person name="Niblett D."/>
            <person name="Odell C."/>
            <person name="Oliver K."/>
            <person name="O'Neil S."/>
            <person name="Pearson D."/>
            <person name="Quail M.A."/>
            <person name="Rabbinowitsch E."/>
            <person name="Rutherford K.M."/>
            <person name="Rutter S."/>
            <person name="Saunders D."/>
            <person name="Seeger K."/>
            <person name="Sharp S."/>
            <person name="Skelton J."/>
            <person name="Simmonds M.N."/>
            <person name="Squares R."/>
            <person name="Squares S."/>
            <person name="Stevens K."/>
            <person name="Taylor K."/>
            <person name="Taylor R.G."/>
            <person name="Tivey A."/>
            <person name="Walsh S.V."/>
            <person name="Warren T."/>
            <person name="Whitehead S."/>
            <person name="Woodward J.R."/>
            <person name="Volckaert G."/>
            <person name="Aert R."/>
            <person name="Robben J."/>
            <person name="Grymonprez B."/>
            <person name="Weltjens I."/>
            <person name="Vanstreels E."/>
            <person name="Rieger M."/>
            <person name="Schaefer M."/>
            <person name="Mueller-Auer S."/>
            <person name="Gabel C."/>
            <person name="Fuchs M."/>
            <person name="Duesterhoeft A."/>
            <person name="Fritzc C."/>
            <person name="Holzer E."/>
            <person name="Moestl D."/>
            <person name="Hilbert H."/>
            <person name="Borzym K."/>
            <person name="Langer I."/>
            <person name="Beck A."/>
            <person name="Lehrach H."/>
            <person name="Reinhardt R."/>
            <person name="Pohl T.M."/>
            <person name="Eger P."/>
            <person name="Zimmermann W."/>
            <person name="Wedler H."/>
            <person name="Wambutt R."/>
            <person name="Purnelle B."/>
            <person name="Goffeau A."/>
            <person name="Cadieu E."/>
            <person name="Dreano S."/>
            <person name="Gloux S."/>
            <person name="Lelaure V."/>
            <person name="Mottier S."/>
            <person name="Galibert F."/>
            <person name="Aves S.J."/>
            <person name="Xiang Z."/>
            <person name="Hunt C."/>
            <person name="Moore K."/>
            <person name="Hurst S.M."/>
            <person name="Lucas M."/>
            <person name="Rochet M."/>
            <person name="Gaillardin C."/>
            <person name="Tallada V.A."/>
            <person name="Garzon A."/>
            <person name="Thode G."/>
            <person name="Daga R.R."/>
            <person name="Cruzado L."/>
            <person name="Jimenez J."/>
            <person name="Sanchez M."/>
            <person name="del Rey F."/>
            <person name="Benito J."/>
            <person name="Dominguez A."/>
            <person name="Revuelta J.L."/>
            <person name="Moreno S."/>
            <person name="Armstrong J."/>
            <person name="Forsburg S.L."/>
            <person name="Cerutti L."/>
            <person name="Lowe T."/>
            <person name="McCombie W.R."/>
            <person name="Paulsen I."/>
            <person name="Potashkin J."/>
            <person name="Shpakovski G.V."/>
            <person name="Ussery D."/>
            <person name="Barrell B.G."/>
            <person name="Nurse P."/>
        </authorList>
    </citation>
    <scope>NUCLEOTIDE SEQUENCE [LARGE SCALE GENOMIC DNA]</scope>
    <source>
        <strain>972 / ATCC 24843</strain>
    </source>
</reference>
<reference key="2">
    <citation type="journal article" date="2005" name="Eukaryot. Cell">
        <title>Systematic deletion analysis of fission yeast protein kinases.</title>
        <authorList>
            <person name="Bimbo A."/>
            <person name="Jia Y."/>
            <person name="Poh S.L."/>
            <person name="Karuturi R.K.M."/>
            <person name="den Elzen N."/>
            <person name="Peng X."/>
            <person name="Zheng L."/>
            <person name="O'Connell M."/>
            <person name="Liu E.T."/>
            <person name="Balasubramanian M.K."/>
            <person name="Liu J."/>
        </authorList>
    </citation>
    <scope>IDENTIFICATION</scope>
</reference>
<keyword id="KW-0547">Nucleotide-binding</keyword>
<keyword id="KW-1185">Reference proteome</keyword>
<gene>
    <name type="primary">ppk38</name>
    <name type="ORF">SPCP1E11.02</name>
</gene>
<organism>
    <name type="scientific">Schizosaccharomyces pombe (strain 972 / ATCC 24843)</name>
    <name type="common">Fission yeast</name>
    <dbReference type="NCBI Taxonomy" id="284812"/>
    <lineage>
        <taxon>Eukaryota</taxon>
        <taxon>Fungi</taxon>
        <taxon>Dikarya</taxon>
        <taxon>Ascomycota</taxon>
        <taxon>Taphrinomycotina</taxon>
        <taxon>Schizosaccharomycetes</taxon>
        <taxon>Schizosaccharomycetales</taxon>
        <taxon>Schizosaccharomycetaceae</taxon>
        <taxon>Schizosaccharomyces</taxon>
    </lineage>
</organism>
<name>PPK38_SCHPO</name>
<comment type="domain">
    <text>The protein kinase domain is predicted to be catalytically inactive.</text>
</comment>
<sequence>MNETNNTSLLPVSSLPSGLLPVGFSCTVEKFSVTVKRYLAEGGFSHVYLVQLVFPGKPPFEAVLKRIFATDAMALRAVHEEVRTMKLVSNQKRCVSYYGSEFFRTSKNQFEVLVLLEYCPCGGLIDFLNTRLQVRLSEQEILKIASDVTEAVAVMHYLKPPLIHRDLKIENVLLAAPNSYKLCDFGSACHPIPGAKTAAEAKQLEYDIEKFTTWQYRCPEMINVHKGFGIDEKSDIWALGVLFYKLCYYTTPFEHQGLAAIMNVSYAFPTFPPYSDRLKRLISTLLQQYPWQRPNIYQTFCEICKMRNVPIHIYDIYNGKNVSSCNPSGSEYLQHASKLENSGIHQSKSSVFPQPASAMKPMASPMLPNVNSMPYLSNGDHNNNGNTSSPVSRFSYGQHTSNVPSTQKLPSNFRVTQGAPPSHTYGPPPPVQPKPKISPTTPRLSTLALADDMFSSTAKETVPTNEAVFTGDVKSFDSQESNIIESEPLSASNASGKPRTSVNRLVDRYNHTSSLNKVAAAPAPVPKPVNLKSVENPQNNISAPTPSSLQSSNAPVGLGEVESKSVPPTNMATERGVVGRRASMSIAVNARRVSKPEKEHTNPNAEQGDVIPEKPMSIKERMNMLMTKTDYEKPKVEGYGRYTDVQQTKK</sequence>
<feature type="chain" id="PRO_0000256833" description="Protein kinase domain-containing protein ppk38">
    <location>
        <begin position="1"/>
        <end position="650"/>
    </location>
</feature>
<feature type="domain" description="Protein kinase" evidence="1">
    <location>
        <begin position="33"/>
        <end position="315"/>
    </location>
</feature>
<feature type="region of interest" description="Disordered" evidence="2">
    <location>
        <begin position="344"/>
        <end position="442"/>
    </location>
</feature>
<feature type="region of interest" description="Disordered" evidence="2">
    <location>
        <begin position="517"/>
        <end position="571"/>
    </location>
</feature>
<feature type="region of interest" description="Disordered" evidence="2">
    <location>
        <begin position="591"/>
        <end position="616"/>
    </location>
</feature>
<feature type="compositionally biased region" description="Polar residues" evidence="2">
    <location>
        <begin position="369"/>
        <end position="415"/>
    </location>
</feature>
<feature type="compositionally biased region" description="Polar residues" evidence="2">
    <location>
        <begin position="533"/>
        <end position="554"/>
    </location>
</feature>
<accession>Q9UU85</accession>
<evidence type="ECO:0000255" key="1">
    <source>
        <dbReference type="PROSITE-ProRule" id="PRU00159"/>
    </source>
</evidence>
<evidence type="ECO:0000256" key="2">
    <source>
        <dbReference type="SAM" id="MobiDB-lite"/>
    </source>
</evidence>
<proteinExistence type="predicted"/>
<protein>
    <recommendedName>
        <fullName>Protein kinase domain-containing protein ppk38</fullName>
    </recommendedName>
</protein>
<dbReference type="EMBL" id="CU329672">
    <property type="protein sequence ID" value="CAB54861.1"/>
    <property type="molecule type" value="Genomic_DNA"/>
</dbReference>
<dbReference type="PIR" id="T41681">
    <property type="entry name" value="T41681"/>
</dbReference>
<dbReference type="RefSeq" id="NP_588555.1">
    <property type="nucleotide sequence ID" value="NM_001023542.2"/>
</dbReference>
<dbReference type="SMR" id="Q9UU85"/>
<dbReference type="BioGRID" id="275603">
    <property type="interactions" value="33"/>
</dbReference>
<dbReference type="FunCoup" id="Q9UU85">
    <property type="interactions" value="472"/>
</dbReference>
<dbReference type="STRING" id="284812.Q9UU85"/>
<dbReference type="iPTMnet" id="Q9UU85"/>
<dbReference type="PaxDb" id="4896-SPCP1E11.02.1"/>
<dbReference type="EnsemblFungi" id="SPCP1E11.02.1">
    <property type="protein sequence ID" value="SPCP1E11.02.1:pep"/>
    <property type="gene ID" value="SPCP1E11.02"/>
</dbReference>
<dbReference type="GeneID" id="2539030"/>
<dbReference type="KEGG" id="spo:2539030"/>
<dbReference type="PomBase" id="SPCP1E11.02">
    <property type="gene designation" value="ppk38"/>
</dbReference>
<dbReference type="VEuPathDB" id="FungiDB:SPCP1E11.02"/>
<dbReference type="eggNOG" id="KOG1989">
    <property type="taxonomic scope" value="Eukaryota"/>
</dbReference>
<dbReference type="HOGENOM" id="CLU_011638_3_1_1"/>
<dbReference type="InParanoid" id="Q9UU85"/>
<dbReference type="PhylomeDB" id="Q9UU85"/>
<dbReference type="PRO" id="PR:Q9UU85"/>
<dbReference type="Proteomes" id="UP000002485">
    <property type="component" value="Chromosome III"/>
</dbReference>
<dbReference type="GO" id="GO:0030479">
    <property type="term" value="C:actin cortical patch"/>
    <property type="evidence" value="ECO:0000266"/>
    <property type="project" value="PomBase"/>
</dbReference>
<dbReference type="GO" id="GO:0005737">
    <property type="term" value="C:cytoplasm"/>
    <property type="evidence" value="ECO:0007005"/>
    <property type="project" value="PomBase"/>
</dbReference>
<dbReference type="GO" id="GO:0005524">
    <property type="term" value="F:ATP binding"/>
    <property type="evidence" value="ECO:0000255"/>
    <property type="project" value="PomBase"/>
</dbReference>
<dbReference type="GO" id="GO:0004674">
    <property type="term" value="F:protein serine/threonine kinase activity"/>
    <property type="evidence" value="ECO:0000318"/>
    <property type="project" value="GO_Central"/>
</dbReference>
<dbReference type="GO" id="GO:0000147">
    <property type="term" value="P:actin cortical patch assembly"/>
    <property type="evidence" value="ECO:0000318"/>
    <property type="project" value="GO_Central"/>
</dbReference>
<dbReference type="GO" id="GO:0007015">
    <property type="term" value="P:actin filament organization"/>
    <property type="evidence" value="ECO:0000318"/>
    <property type="project" value="GO_Central"/>
</dbReference>
<dbReference type="GO" id="GO:2000369">
    <property type="term" value="P:regulation of clathrin-dependent endocytosis"/>
    <property type="evidence" value="ECO:0000266"/>
    <property type="project" value="PomBase"/>
</dbReference>
<dbReference type="GO" id="GO:0023052">
    <property type="term" value="P:signaling"/>
    <property type="evidence" value="ECO:0000305"/>
    <property type="project" value="PomBase"/>
</dbReference>
<dbReference type="Gene3D" id="1.10.510.10">
    <property type="entry name" value="Transferase(Phosphotransferase) domain 1"/>
    <property type="match status" value="1"/>
</dbReference>
<dbReference type="InterPro" id="IPR011009">
    <property type="entry name" value="Kinase-like_dom_sf"/>
</dbReference>
<dbReference type="InterPro" id="IPR000719">
    <property type="entry name" value="Prot_kinase_dom"/>
</dbReference>
<dbReference type="InterPro" id="IPR008271">
    <property type="entry name" value="Ser/Thr_kinase_AS"/>
</dbReference>
<dbReference type="PANTHER" id="PTHR22967:SF102">
    <property type="entry name" value="PROTEIN KINASE DOMAIN-CONTAINING PROTEIN PPK38"/>
    <property type="match status" value="1"/>
</dbReference>
<dbReference type="PANTHER" id="PTHR22967">
    <property type="entry name" value="SERINE/THREONINE PROTEIN KINASE"/>
    <property type="match status" value="1"/>
</dbReference>
<dbReference type="Pfam" id="PF00069">
    <property type="entry name" value="Pkinase"/>
    <property type="match status" value="1"/>
</dbReference>
<dbReference type="SMART" id="SM00220">
    <property type="entry name" value="S_TKc"/>
    <property type="match status" value="1"/>
</dbReference>
<dbReference type="SUPFAM" id="SSF56112">
    <property type="entry name" value="Protein kinase-like (PK-like)"/>
    <property type="match status" value="1"/>
</dbReference>
<dbReference type="PROSITE" id="PS50011">
    <property type="entry name" value="PROTEIN_KINASE_DOM"/>
    <property type="match status" value="1"/>
</dbReference>
<dbReference type="PROSITE" id="PS00108">
    <property type="entry name" value="PROTEIN_KINASE_ST"/>
    <property type="match status" value="1"/>
</dbReference>